<sequence length="770" mass="88067">MAQWNQLQQLDTRYLEQLHQLYSDSFPMELRQFLAPWIESQDWAYAASKESHATLVFHNLLGEIDQQYSRFLQESNVLYQHNLRRIKQFLQSRYLEKPMEIARIVARCLWEESRLLQTAATAAQQGGQANHPTAAVVTEKQQMLEQHLQDVRKRVQDLEQKMKVVENLQDDFDFNYKTLKSQGDMQDLNGNNQSVTRQKMQQLEQMLTALDQMRRSIVSELAGLLSAMEYVQKTLTDEELADWKRRQQIACIGGPPNICLDRLENWITSLAESQLQTRQQIKKLEELQQKVSYKGDPIVQHRPMLEERIVELFRNLMKSAFVVERQPCMPMHPDRPLVIKTGVQFTTKVRLLVKFPELNYQLKIKVCIDKDSGDVAALRGSRKFNILGTNTKVMNMEESNNGSLSAEFKHLTLREQRCGNGGRANCDASLIVTEELHLITFETEVYHQGLKIDLETHSLPVVVISNICQMPNAWASILWYNMLTNNPKNVNFFTKPPIGTWDQVAEVLSWQFSSTTKRGLSIEQLSTLAEKLLGPGVNYSGCQITWAKFCKENMAGKGFSFWVWLDNIIDLVKKYILALWNEGYIMGFISKERERAILSTKPPGTFLLRFSESSKEGGVTFTWVEKDISGKTQIQSVEPYTKQQLNNMSFAEIIMGYKIMDATNILVSPLVYLYPDIPKEEAFGKYCRPESQEHPEADPGSAAPYLKTKFICVTPTTCSNTIDLPMSPRTLDSLMQFGNNGEGAEPSAGGQFESLTFDMELNSECATSPM</sequence>
<protein>
    <recommendedName>
        <fullName>Signal transducer and activator of transcription 3</fullName>
    </recommendedName>
</protein>
<accession>Q19S50</accession>
<reference key="1">
    <citation type="journal article" date="2006" name="Reproduction">
        <title>Cloning of porcine signal transducer and activator of transcription 3 cDNA and its expression in reproductive tissues.</title>
        <authorList>
            <person name="Wen L."/>
            <person name="Craig J."/>
            <person name="Dyce P.W."/>
            <person name="Li J."/>
        </authorList>
    </citation>
    <scope>NUCLEOTIDE SEQUENCE [MRNA]</scope>
    <scope>PHOSPHORYLATION</scope>
    <scope>SUBCELLULAR LOCATION</scope>
    <scope>TISSUE SPECIFICITY</scope>
    <source>
        <tissue>Skin</tissue>
    </source>
</reference>
<evidence type="ECO:0000250" key="1"/>
<evidence type="ECO:0000250" key="2">
    <source>
        <dbReference type="UniProtKB" id="P40763"/>
    </source>
</evidence>
<evidence type="ECO:0000250" key="3">
    <source>
        <dbReference type="UniProtKB" id="P42227"/>
    </source>
</evidence>
<evidence type="ECO:0000250" key="4">
    <source>
        <dbReference type="UniProtKB" id="P52631"/>
    </source>
</evidence>
<evidence type="ECO:0000255" key="5">
    <source>
        <dbReference type="PROSITE-ProRule" id="PRU00191"/>
    </source>
</evidence>
<evidence type="ECO:0000269" key="6">
    <source>
    </source>
</evidence>
<evidence type="ECO:0000305" key="7"/>
<proteinExistence type="evidence at protein level"/>
<name>STAT3_PIG</name>
<dbReference type="EMBL" id="DQ470570">
    <property type="protein sequence ID" value="ABF21150.1"/>
    <property type="molecule type" value="mRNA"/>
</dbReference>
<dbReference type="RefSeq" id="NP_001038045.1">
    <property type="nucleotide sequence ID" value="NM_001044580.1"/>
</dbReference>
<dbReference type="SMR" id="Q19S50"/>
<dbReference type="FunCoup" id="Q19S50">
    <property type="interactions" value="1099"/>
</dbReference>
<dbReference type="STRING" id="9823.ENSSSCP00000018439"/>
<dbReference type="iPTMnet" id="Q19S50"/>
<dbReference type="PaxDb" id="9823-ENSSSCP00000018439"/>
<dbReference type="PeptideAtlas" id="Q19S50"/>
<dbReference type="Ensembl" id="ENSSSCT00015084631.1">
    <property type="protein sequence ID" value="ENSSSCP00015034340.1"/>
    <property type="gene ID" value="ENSSSCG00015062720.1"/>
</dbReference>
<dbReference type="Ensembl" id="ENSSSCT00030095248.1">
    <property type="protein sequence ID" value="ENSSSCP00030043893.1"/>
    <property type="gene ID" value="ENSSSCG00030068070.1"/>
</dbReference>
<dbReference type="Ensembl" id="ENSSSCT00040019448.1">
    <property type="protein sequence ID" value="ENSSSCP00040008054.1"/>
    <property type="gene ID" value="ENSSSCG00040014380.1"/>
</dbReference>
<dbReference type="Ensembl" id="ENSSSCT00040019994.1">
    <property type="protein sequence ID" value="ENSSSCP00040008333.1"/>
    <property type="gene ID" value="ENSSSCG00040014380.1"/>
</dbReference>
<dbReference type="Ensembl" id="ENSSSCT00045066831.1">
    <property type="protein sequence ID" value="ENSSSCP00045047441.1"/>
    <property type="gene ID" value="ENSSSCG00045038505.1"/>
</dbReference>
<dbReference type="Ensembl" id="ENSSSCT00060070708.1">
    <property type="protein sequence ID" value="ENSSSCP00060030502.1"/>
    <property type="gene ID" value="ENSSSCG00060051919.1"/>
</dbReference>
<dbReference type="Ensembl" id="ENSSSCT00060070768.1">
    <property type="protein sequence ID" value="ENSSSCP00060030532.1"/>
    <property type="gene ID" value="ENSSSCG00060051919.1"/>
</dbReference>
<dbReference type="Ensembl" id="ENSSSCT00060070776.1">
    <property type="protein sequence ID" value="ENSSSCP00060030536.1"/>
    <property type="gene ID" value="ENSSSCG00060051919.1"/>
</dbReference>
<dbReference type="Ensembl" id="ENSSSCT00070027546.1">
    <property type="protein sequence ID" value="ENSSSCP00070022915.1"/>
    <property type="gene ID" value="ENSSSCG00070014017.1"/>
</dbReference>
<dbReference type="Ensembl" id="ENSSSCT00070027606.1">
    <property type="protein sequence ID" value="ENSSSCP00070022971.1"/>
    <property type="gene ID" value="ENSSSCG00070014017.1"/>
</dbReference>
<dbReference type="Ensembl" id="ENSSSCT00090011701">
    <property type="protein sequence ID" value="ENSSSCP00090007348"/>
    <property type="gene ID" value="ENSSSCG00090006570"/>
</dbReference>
<dbReference type="Ensembl" id="ENSSSCT00115038360">
    <property type="protein sequence ID" value="ENSSSCP00115036213"/>
    <property type="gene ID" value="ENSSSCG00115021625"/>
</dbReference>
<dbReference type="GeneID" id="733648"/>
<dbReference type="KEGG" id="ssc:733648"/>
<dbReference type="CTD" id="6774"/>
<dbReference type="eggNOG" id="KOG3667">
    <property type="taxonomic scope" value="Eukaryota"/>
</dbReference>
<dbReference type="HOGENOM" id="CLU_014189_3_0_1"/>
<dbReference type="InParanoid" id="Q19S50"/>
<dbReference type="OrthoDB" id="19300at2759"/>
<dbReference type="TreeFam" id="TF318648"/>
<dbReference type="Reactome" id="R-SSC-1059683">
    <property type="pathway name" value="Interleukin-6 signaling"/>
</dbReference>
<dbReference type="Reactome" id="R-SSC-1266695">
    <property type="pathway name" value="Interleukin-7 signaling"/>
</dbReference>
<dbReference type="Reactome" id="R-SSC-1433557">
    <property type="pathway name" value="Signaling by SCF-KIT"/>
</dbReference>
<dbReference type="Reactome" id="R-SSC-186763">
    <property type="pathway name" value="Downstream signal transduction"/>
</dbReference>
<dbReference type="Reactome" id="R-SSC-201556">
    <property type="pathway name" value="Signaling by ALK"/>
</dbReference>
<dbReference type="Reactome" id="R-SSC-6783783">
    <property type="pathway name" value="Interleukin-10 signaling"/>
</dbReference>
<dbReference type="Reactome" id="R-SSC-6785807">
    <property type="pathway name" value="Interleukin-4 and Interleukin-13 signaling"/>
</dbReference>
<dbReference type="Reactome" id="R-SSC-8849474">
    <property type="pathway name" value="PTK6 Activates STAT3"/>
</dbReference>
<dbReference type="Reactome" id="R-SSC-8854691">
    <property type="pathway name" value="Interleukin-20 family signaling"/>
</dbReference>
<dbReference type="Reactome" id="R-SSC-8875791">
    <property type="pathway name" value="MET activates STAT3"/>
</dbReference>
<dbReference type="Reactome" id="R-SSC-8983432">
    <property type="pathway name" value="Interleukin-15 signaling"/>
</dbReference>
<dbReference type="Reactome" id="R-SSC-8984722">
    <property type="pathway name" value="Interleukin-35 Signalling"/>
</dbReference>
<dbReference type="Reactome" id="R-SSC-8985947">
    <property type="pathway name" value="Interleukin-9 signaling"/>
</dbReference>
<dbReference type="Reactome" id="R-SSC-9008059">
    <property type="pathway name" value="Interleukin-37 signaling"/>
</dbReference>
<dbReference type="Reactome" id="R-SSC-9020933">
    <property type="pathway name" value="Interleukin-23 signaling"/>
</dbReference>
<dbReference type="Reactome" id="R-SSC-9020956">
    <property type="pathway name" value="Interleukin-27 signaling"/>
</dbReference>
<dbReference type="Reactome" id="R-SSC-9020958">
    <property type="pathway name" value="Interleukin-21 signaling"/>
</dbReference>
<dbReference type="Reactome" id="R-SSC-9701898">
    <property type="pathway name" value="STAT3 nuclear events downstream of ALK signaling"/>
</dbReference>
<dbReference type="Reactome" id="R-SSC-9833482">
    <property type="pathway name" value="PKR-mediated signaling"/>
</dbReference>
<dbReference type="Proteomes" id="UP000008227">
    <property type="component" value="Unplaced"/>
</dbReference>
<dbReference type="Proteomes" id="UP000314985">
    <property type="component" value="Chromosome 12"/>
</dbReference>
<dbReference type="Proteomes" id="UP000694570">
    <property type="component" value="Unplaced"/>
</dbReference>
<dbReference type="Proteomes" id="UP000694571">
    <property type="component" value="Unplaced"/>
</dbReference>
<dbReference type="Proteomes" id="UP000694720">
    <property type="component" value="Unplaced"/>
</dbReference>
<dbReference type="Proteomes" id="UP000694722">
    <property type="component" value="Unplaced"/>
</dbReference>
<dbReference type="Proteomes" id="UP000694723">
    <property type="component" value="Unplaced"/>
</dbReference>
<dbReference type="Proteomes" id="UP000694724">
    <property type="component" value="Unplaced"/>
</dbReference>
<dbReference type="Proteomes" id="UP000694725">
    <property type="component" value="Unplaced"/>
</dbReference>
<dbReference type="Proteomes" id="UP000694726">
    <property type="component" value="Unplaced"/>
</dbReference>
<dbReference type="Proteomes" id="UP000694727">
    <property type="component" value="Unplaced"/>
</dbReference>
<dbReference type="Proteomes" id="UP000694728">
    <property type="component" value="Unplaced"/>
</dbReference>
<dbReference type="GO" id="GO:0005737">
    <property type="term" value="C:cytoplasm"/>
    <property type="evidence" value="ECO:0000250"/>
    <property type="project" value="UniProtKB"/>
</dbReference>
<dbReference type="GO" id="GO:0005634">
    <property type="term" value="C:nucleus"/>
    <property type="evidence" value="ECO:0000250"/>
    <property type="project" value="UniProtKB"/>
</dbReference>
<dbReference type="GO" id="GO:0005886">
    <property type="term" value="C:plasma membrane"/>
    <property type="evidence" value="ECO:0000250"/>
    <property type="project" value="UniProtKB"/>
</dbReference>
<dbReference type="GO" id="GO:0090575">
    <property type="term" value="C:RNA polymerase II transcription regulator complex"/>
    <property type="evidence" value="ECO:0000318"/>
    <property type="project" value="GO_Central"/>
</dbReference>
<dbReference type="GO" id="GO:0031490">
    <property type="term" value="F:chromatin DNA binding"/>
    <property type="evidence" value="ECO:0000250"/>
    <property type="project" value="UniProtKB"/>
</dbReference>
<dbReference type="GO" id="GO:0003677">
    <property type="term" value="F:DNA binding"/>
    <property type="evidence" value="ECO:0000250"/>
    <property type="project" value="UniProtKB"/>
</dbReference>
<dbReference type="GO" id="GO:0003700">
    <property type="term" value="F:DNA-binding transcription factor activity"/>
    <property type="evidence" value="ECO:0000250"/>
    <property type="project" value="UniProtKB"/>
</dbReference>
<dbReference type="GO" id="GO:0000981">
    <property type="term" value="F:DNA-binding transcription factor activity, RNA polymerase II-specific"/>
    <property type="evidence" value="ECO:0000250"/>
    <property type="project" value="UniProtKB"/>
</dbReference>
<dbReference type="GO" id="GO:0046983">
    <property type="term" value="F:protein dimerization activity"/>
    <property type="evidence" value="ECO:0000250"/>
    <property type="project" value="UniProtKB"/>
</dbReference>
<dbReference type="GO" id="GO:0042803">
    <property type="term" value="F:protein homodimerization activity"/>
    <property type="evidence" value="ECO:0000250"/>
    <property type="project" value="UniProtKB"/>
</dbReference>
<dbReference type="GO" id="GO:0019901">
    <property type="term" value="F:protein kinase binding"/>
    <property type="evidence" value="ECO:0000250"/>
    <property type="project" value="UniProtKB"/>
</dbReference>
<dbReference type="GO" id="GO:0000978">
    <property type="term" value="F:RNA polymerase II cis-regulatory region sequence-specific DNA binding"/>
    <property type="evidence" value="ECO:0000318"/>
    <property type="project" value="GO_Central"/>
</dbReference>
<dbReference type="GO" id="GO:0000976">
    <property type="term" value="F:transcription cis-regulatory region binding"/>
    <property type="evidence" value="ECO:0000250"/>
    <property type="project" value="UniProtKB"/>
</dbReference>
<dbReference type="GO" id="GO:0048708">
    <property type="term" value="P:astrocyte differentiation"/>
    <property type="evidence" value="ECO:0000250"/>
    <property type="project" value="UniProtKB"/>
</dbReference>
<dbReference type="GO" id="GO:0007259">
    <property type="term" value="P:cell surface receptor signaling pathway via JAK-STAT"/>
    <property type="evidence" value="ECO:0000318"/>
    <property type="project" value="GO_Central"/>
</dbReference>
<dbReference type="GO" id="GO:0044320">
    <property type="term" value="P:cellular response to leptin stimulus"/>
    <property type="evidence" value="ECO:0000250"/>
    <property type="project" value="UniProtKB"/>
</dbReference>
<dbReference type="GO" id="GO:0006952">
    <property type="term" value="P:defense response"/>
    <property type="evidence" value="ECO:0000318"/>
    <property type="project" value="GO_Central"/>
</dbReference>
<dbReference type="GO" id="GO:0042755">
    <property type="term" value="P:eating behavior"/>
    <property type="evidence" value="ECO:0000250"/>
    <property type="project" value="UniProtKB"/>
</dbReference>
<dbReference type="GO" id="GO:0097009">
    <property type="term" value="P:energy homeostasis"/>
    <property type="evidence" value="ECO:0000250"/>
    <property type="project" value="UniProtKB"/>
</dbReference>
<dbReference type="GO" id="GO:0001754">
    <property type="term" value="P:eye photoreceptor cell differentiation"/>
    <property type="evidence" value="ECO:0000250"/>
    <property type="project" value="UniProtKB"/>
</dbReference>
<dbReference type="GO" id="GO:0042593">
    <property type="term" value="P:glucose homeostasis"/>
    <property type="evidence" value="ECO:0000250"/>
    <property type="project" value="UniProtKB"/>
</dbReference>
<dbReference type="GO" id="GO:0060397">
    <property type="term" value="P:growth hormone receptor signaling pathway via JAK-STAT"/>
    <property type="evidence" value="ECO:0000250"/>
    <property type="project" value="UniProtKB"/>
</dbReference>
<dbReference type="GO" id="GO:0006954">
    <property type="term" value="P:inflammatory response"/>
    <property type="evidence" value="ECO:0000250"/>
    <property type="project" value="UniProtKB"/>
</dbReference>
<dbReference type="GO" id="GO:0070102">
    <property type="term" value="P:interleukin-6-mediated signaling pathway"/>
    <property type="evidence" value="ECO:0000250"/>
    <property type="project" value="UniProtKB"/>
</dbReference>
<dbReference type="GO" id="GO:0033210">
    <property type="term" value="P:leptin-mediated signaling pathway"/>
    <property type="evidence" value="ECO:0000250"/>
    <property type="project" value="UniProtKB"/>
</dbReference>
<dbReference type="GO" id="GO:0016310">
    <property type="term" value="P:phosphorylation"/>
    <property type="evidence" value="ECO:0000250"/>
    <property type="project" value="UniProtKB"/>
</dbReference>
<dbReference type="GO" id="GO:0045893">
    <property type="term" value="P:positive regulation of DNA-templated transcription"/>
    <property type="evidence" value="ECO:0000250"/>
    <property type="project" value="UniProtKB"/>
</dbReference>
<dbReference type="GO" id="GO:0045648">
    <property type="term" value="P:positive regulation of erythrocyte differentiation"/>
    <property type="evidence" value="ECO:0000250"/>
    <property type="project" value="UniProtKB"/>
</dbReference>
<dbReference type="GO" id="GO:0045747">
    <property type="term" value="P:positive regulation of Notch signaling pathway"/>
    <property type="evidence" value="ECO:0000250"/>
    <property type="project" value="UniProtKB"/>
</dbReference>
<dbReference type="GO" id="GO:0045944">
    <property type="term" value="P:positive regulation of transcription by RNA polymerase II"/>
    <property type="evidence" value="ECO:0000250"/>
    <property type="project" value="UniProtKB"/>
</dbReference>
<dbReference type="GO" id="GO:0006606">
    <property type="term" value="P:protein import into nucleus"/>
    <property type="evidence" value="ECO:0000250"/>
    <property type="project" value="UniProtKB"/>
</dbReference>
<dbReference type="GO" id="GO:0060019">
    <property type="term" value="P:radial glial cell differentiation"/>
    <property type="evidence" value="ECO:0000250"/>
    <property type="project" value="UniProtKB"/>
</dbReference>
<dbReference type="GO" id="GO:0051726">
    <property type="term" value="P:regulation of cell cycle"/>
    <property type="evidence" value="ECO:0000250"/>
    <property type="project" value="UniProtKB"/>
</dbReference>
<dbReference type="GO" id="GO:0042127">
    <property type="term" value="P:regulation of cell population proliferation"/>
    <property type="evidence" value="ECO:0000318"/>
    <property type="project" value="GO_Central"/>
</dbReference>
<dbReference type="GO" id="GO:0006355">
    <property type="term" value="P:regulation of DNA-templated transcription"/>
    <property type="evidence" value="ECO:0000250"/>
    <property type="project" value="UniProtKB"/>
</dbReference>
<dbReference type="GO" id="GO:0060259">
    <property type="term" value="P:regulation of feeding behavior"/>
    <property type="evidence" value="ECO:0000250"/>
    <property type="project" value="UniProtKB"/>
</dbReference>
<dbReference type="GO" id="GO:0006357">
    <property type="term" value="P:regulation of transcription by RNA polymerase II"/>
    <property type="evidence" value="ECO:0000250"/>
    <property type="project" value="UniProtKB"/>
</dbReference>
<dbReference type="GO" id="GO:0044321">
    <property type="term" value="P:response to leptin"/>
    <property type="evidence" value="ECO:0000250"/>
    <property type="project" value="UniProtKB"/>
</dbReference>
<dbReference type="GO" id="GO:0043434">
    <property type="term" value="P:response to peptide hormone"/>
    <property type="evidence" value="ECO:0000318"/>
    <property type="project" value="GO_Central"/>
</dbReference>
<dbReference type="GO" id="GO:0019953">
    <property type="term" value="P:sexual reproduction"/>
    <property type="evidence" value="ECO:0000250"/>
    <property type="project" value="UniProtKB"/>
</dbReference>
<dbReference type="GO" id="GO:0072540">
    <property type="term" value="P:T-helper 17 cell lineage commitment"/>
    <property type="evidence" value="ECO:0000250"/>
    <property type="project" value="UniProtKB"/>
</dbReference>
<dbReference type="GO" id="GO:0072538">
    <property type="term" value="P:T-helper 17 type immune response"/>
    <property type="evidence" value="ECO:0000250"/>
    <property type="project" value="UniProtKB"/>
</dbReference>
<dbReference type="GO" id="GO:0001659">
    <property type="term" value="P:temperature homeostasis"/>
    <property type="evidence" value="ECO:0000250"/>
    <property type="project" value="UniProtKB"/>
</dbReference>
<dbReference type="CDD" id="cd10374">
    <property type="entry name" value="SH2_STAT3"/>
    <property type="match status" value="1"/>
</dbReference>
<dbReference type="CDD" id="cd16853">
    <property type="entry name" value="STAT3_CCD"/>
    <property type="match status" value="1"/>
</dbReference>
<dbReference type="CDD" id="cd16847">
    <property type="entry name" value="STAT3_DBD"/>
    <property type="match status" value="1"/>
</dbReference>
<dbReference type="FunFam" id="1.10.238.10:FF:000012">
    <property type="entry name" value="Signal transducer and activator of transcription"/>
    <property type="match status" value="1"/>
</dbReference>
<dbReference type="FunFam" id="1.10.532.10:FF:000001">
    <property type="entry name" value="Signal transducer and activator of transcription"/>
    <property type="match status" value="1"/>
</dbReference>
<dbReference type="FunFam" id="1.20.1050.20:FF:000003">
    <property type="entry name" value="Signal transducer and activator of transcription"/>
    <property type="match status" value="1"/>
</dbReference>
<dbReference type="FunFam" id="3.30.505.10:FF:000003">
    <property type="entry name" value="Signal transducer and activator of transcription"/>
    <property type="match status" value="1"/>
</dbReference>
<dbReference type="FunFam" id="2.60.40.630:FF:000012">
    <property type="entry name" value="Signal transducer and activator of transcription 3"/>
    <property type="match status" value="1"/>
</dbReference>
<dbReference type="Gene3D" id="1.10.238.10">
    <property type="entry name" value="EF-hand"/>
    <property type="match status" value="1"/>
</dbReference>
<dbReference type="Gene3D" id="3.30.505.10">
    <property type="entry name" value="SH2 domain"/>
    <property type="match status" value="1"/>
</dbReference>
<dbReference type="Gene3D" id="1.20.1050.20">
    <property type="entry name" value="STAT transcription factor, all-alpha domain"/>
    <property type="match status" value="1"/>
</dbReference>
<dbReference type="Gene3D" id="2.60.40.630">
    <property type="entry name" value="STAT transcription factor, DNA-binding domain"/>
    <property type="match status" value="1"/>
</dbReference>
<dbReference type="Gene3D" id="1.10.532.10">
    <property type="entry name" value="STAT transcription factor, N-terminal domain"/>
    <property type="match status" value="1"/>
</dbReference>
<dbReference type="InterPro" id="IPR008967">
    <property type="entry name" value="p53-like_TF_DNA-bd_sf"/>
</dbReference>
<dbReference type="InterPro" id="IPR000980">
    <property type="entry name" value="SH2"/>
</dbReference>
<dbReference type="InterPro" id="IPR036860">
    <property type="entry name" value="SH2_dom_sf"/>
</dbReference>
<dbReference type="InterPro" id="IPR001217">
    <property type="entry name" value="STAT"/>
</dbReference>
<dbReference type="InterPro" id="IPR035855">
    <property type="entry name" value="STAT3_SH2"/>
</dbReference>
<dbReference type="InterPro" id="IPR048988">
    <property type="entry name" value="STAT_linker"/>
</dbReference>
<dbReference type="InterPro" id="IPR036535">
    <property type="entry name" value="STAT_N_sf"/>
</dbReference>
<dbReference type="InterPro" id="IPR013800">
    <property type="entry name" value="STAT_TF_alpha"/>
</dbReference>
<dbReference type="InterPro" id="IPR015988">
    <property type="entry name" value="STAT_TF_coiled-coil"/>
</dbReference>
<dbReference type="InterPro" id="IPR013801">
    <property type="entry name" value="STAT_TF_DNA-bd"/>
</dbReference>
<dbReference type="InterPro" id="IPR012345">
    <property type="entry name" value="STAT_TF_DNA-bd_N"/>
</dbReference>
<dbReference type="InterPro" id="IPR013799">
    <property type="entry name" value="STAT_TF_prot_interaction"/>
</dbReference>
<dbReference type="PANTHER" id="PTHR11801">
    <property type="entry name" value="SIGNAL TRANSDUCER AND ACTIVATOR OF TRANSCRIPTION"/>
    <property type="match status" value="1"/>
</dbReference>
<dbReference type="Pfam" id="PF00017">
    <property type="entry name" value="SH2"/>
    <property type="match status" value="1"/>
</dbReference>
<dbReference type="Pfam" id="PF01017">
    <property type="entry name" value="STAT_alpha"/>
    <property type="match status" value="1"/>
</dbReference>
<dbReference type="Pfam" id="PF02864">
    <property type="entry name" value="STAT_bind"/>
    <property type="match status" value="1"/>
</dbReference>
<dbReference type="Pfam" id="PF02865">
    <property type="entry name" value="STAT_int"/>
    <property type="match status" value="1"/>
</dbReference>
<dbReference type="Pfam" id="PF21354">
    <property type="entry name" value="STAT_linker"/>
    <property type="match status" value="1"/>
</dbReference>
<dbReference type="SMART" id="SM00964">
    <property type="entry name" value="STAT_int"/>
    <property type="match status" value="1"/>
</dbReference>
<dbReference type="SUPFAM" id="SSF49417">
    <property type="entry name" value="p53-like transcription factors"/>
    <property type="match status" value="1"/>
</dbReference>
<dbReference type="SUPFAM" id="SSF55550">
    <property type="entry name" value="SH2 domain"/>
    <property type="match status" value="1"/>
</dbReference>
<dbReference type="SUPFAM" id="SSF47655">
    <property type="entry name" value="STAT"/>
    <property type="match status" value="1"/>
</dbReference>
<dbReference type="SUPFAM" id="SSF48092">
    <property type="entry name" value="Transcription factor STAT-4 N-domain"/>
    <property type="match status" value="1"/>
</dbReference>
<dbReference type="PROSITE" id="PS50001">
    <property type="entry name" value="SH2"/>
    <property type="match status" value="1"/>
</dbReference>
<feature type="initiator methionine" description="Removed" evidence="2">
    <location>
        <position position="1"/>
    </location>
</feature>
<feature type="chain" id="PRO_0000347216" description="Signal transducer and activator of transcription 3">
    <location>
        <begin position="2"/>
        <end position="770"/>
    </location>
</feature>
<feature type="domain" description="SH2" evidence="5">
    <location>
        <begin position="580"/>
        <end position="670"/>
    </location>
</feature>
<feature type="short sequence motif" description="Essential for nuclear import" evidence="1">
    <location>
        <begin position="150"/>
        <end position="162"/>
    </location>
</feature>
<feature type="modified residue" description="N-acetylalanine" evidence="2">
    <location>
        <position position="2"/>
    </location>
</feature>
<feature type="modified residue" description="N6-acetyllysine" evidence="2">
    <location>
        <position position="49"/>
    </location>
</feature>
<feature type="modified residue" description="N6-acetyllysine" evidence="2">
    <location>
        <position position="87"/>
    </location>
</feature>
<feature type="modified residue" description="Allysine; alternate" evidence="2">
    <location>
        <position position="601"/>
    </location>
</feature>
<feature type="modified residue" description="N6-acetyllysine; alternate" evidence="2">
    <location>
        <position position="601"/>
    </location>
</feature>
<feature type="modified residue" description="Allysine; alternate" evidence="2">
    <location>
        <position position="615"/>
    </location>
</feature>
<feature type="modified residue" description="N6-acetyllysine; alternate" evidence="2">
    <location>
        <position position="615"/>
    </location>
</feature>
<feature type="modified residue" description="Allysine; alternate" evidence="2">
    <location>
        <position position="631"/>
    </location>
</feature>
<feature type="modified residue" description="N6-acetyllysine; alternate" evidence="2">
    <location>
        <position position="631"/>
    </location>
</feature>
<feature type="modified residue" description="Phosphotyrosine; by TYK2" evidence="2">
    <location>
        <position position="640"/>
    </location>
</feature>
<feature type="modified residue" description="Allysine; alternate" evidence="2">
    <location>
        <position position="685"/>
    </location>
</feature>
<feature type="modified residue" description="N6-acetyllysine; alternate" evidence="2">
    <location>
        <position position="685"/>
    </location>
</feature>
<feature type="modified residue" description="Phosphotyrosine; by FER and PTK6" evidence="2">
    <location>
        <position position="705"/>
    </location>
</feature>
<feature type="modified residue" description="N6-acetyllysine" evidence="2">
    <location>
        <position position="707"/>
    </location>
</feature>
<feature type="modified residue" description="Phosphothreonine" evidence="2">
    <location>
        <position position="714"/>
    </location>
</feature>
<feature type="modified residue" description="Phosphoserine; by DYRK2, NLK, NEK6, IRAK1, RPS6KA5, ZIPK/DAPK3 and PKC/PRKCE" evidence="2">
    <location>
        <position position="727"/>
    </location>
</feature>
<comment type="function">
    <text evidence="2 3">Signal transducer and transcription activator that mediates cellular responses to interleukins, KITLG/SCF, LEP and other growth factors. Once activated, recruits coactivators, such as NCOA1 or MED1, to the promoter region of the target gene. May mediate cellular responses to activated FGFR1, FGFR2, FGFR3 and FGFR4. Upon activation of IL6ST/gp130 signaling by interleukin-6 (IL6), binds to the IL6-responsive elements identified in the promoters of various acute-phase protein genes. Activated by IL31 through IL31RA (By similarity). Acts as a regulator of inflammatory response by regulating differentiation of naive CD4(+) T-cells into T-helper Th17 or regulatory T-cells (Treg): acetylation promotes its transcription activity and cell differentiation while deacetylation and oxidation of lysine residues by LOXL3 inhibits differentiation (By similarity). Involved in cell cycle regulation by inducing the expression of key genes for the progression from G1 to S phase, such as CCND1 (By similarity). Mediates the effects of LEP on melanocortin production, body energy homeostasis and lactation. May play an apoptotic role by transctivating BIRC5 expression under LEP activation (By similarity). Cytoplasmic STAT3 represses macroautophagy by inhibiting EIF2AK2/PKR activity (By similarity). Plays a crucial role in basal beta cell functions, such as regulation of insulin secretion. Following JAK/STAT signaling activation and as part of a complex with NFATC3 and NFATC4, binds to the alpha-beta E4 promoter region of CRYAB and activates transcription in cardiomyocytes (By similarity). Plays an important role in host defense in methicillin-resistant S.aureus lung infection by regulating the expression of the antimicrobial lectin REG3G (By similarity).</text>
</comment>
<comment type="subunit">
    <text evidence="2 3 4">Forms a homodimer or a heterodimer with a related family member (at least STAT1). Component of a promoter-binding complex composed of STAT3, NFATC3 and NFATC4; complex formation is enhanced by calcineurin (By similarity). Interacts with IL31RA, NCOA1, PELP1, SIPAR, SOCS7, STATIP1 and TMF1 (By similarity). Interacts with IL23R in presence of IL23 (By similarity). Interacts (via SH2 domain) with NLK. Interacts with ARL2BP; the interaction is enhanced by LIF and JAK1 expression (By similarity). Interacts with KPNA4 and KPNA5; KPNA4 may be the primary mediator of nuclear import (By similarity). Interacts with CAV2; the interaction is increased on insulin-induced tyrosine phosphorylation of CAV2 and leads to STAT3 activation (By similarity). Interacts with ARL2BP; interaction is enhanced with ARL2 (By similarity). Interacts with NEK6 (By similarity). Binds to CDK9 when activated and nuclear. Interacts with BMX. Interacts with ZIPK/DAPK3. Interacts with PIAS3; the interaction occurs on stimulation by IL6, CNTF or OSM and inhibits the DNA binding activity of STAT3. In prostate cancer cells, interacts with PRKCE and promotes DNA binding activity of STAT3 (By similarity). Interacts with STMN3, antagonizing its microtubule-destabilizing activity (By similarity). Interacts with the 'Lys-129' acetylated form of BIRC5/survivin. Interacts with FER. Interacts (via SH2 domain) with EIF2AK2/PKR (via the kinase catalytic domain). Interacts with INPP5F; the interaction is independent of STAT3 Tyr-705 phosphorylation status. Interacts with FGFR4 (By similarity). Interacts with OCIAD1 and OCIAD2 (By similarity). Interacts (unphosphorylated or phosphorylated at Ser-727) with PHB1 (By similarity). Interacts and may form heterodimers with NHLH1 (By similarity). Found in a complex with SLC39A6, SLC39A10 and with the 'Ser-727' phosphorylated form of STAT3 throughout mitosis (By similarity). Interacts (when acetylated) with EP300 (via bromo domain); interaction takes place following STAT3 acetylation by EP300 and promotes enhanceosome assembly (By similarity). Interacts (when acetylated) with BRD2 (via bromo domain); interaction promotes STAT3 recruitment to chromatin and T-helper Th17 cell differentiation (By similarity). Interacts with FAM220A/SIPAR; the interaction occurs in both the nucleus and the cytoplasm, is enhanced by IL6 and promotes STAT3 dephosphorylation (By similarity). Interacts in both unphosphorylated and phosphorylated forms with FAM220A but interacts preferentially in the phosphorylated form in the nucleus (By similarity). Interacts with PTPN2; the interaction is promoted by FAM220A and leads to STAT3 dephosphorylation which negatively regulates STAT3 transcriptional activator activity (By similarity).</text>
</comment>
<comment type="subcellular location">
    <subcellularLocation>
        <location evidence="6">Cytoplasm</location>
    </subcellularLocation>
    <subcellularLocation>
        <location evidence="6">Nucleus</location>
    </subcellularLocation>
    <text evidence="2 4">Shuttles between the nucleus and the cytoplasm. Translocated into the nucleus upon tyrosine phosphorylation and dimerization, in response to signaling by activated FGFR1, FGFR2, FGFR3 or FGFR4. Constitutive nuclear presence is independent of tyrosine phosphorylation. Predominantly present in the cytoplasm without stimuli. Upon leukemia inhibitory factor (LIF) stimulation, accumulates in the nucleus. The complex composed of BART and ARL2 plays an important role in the nuclear translocation and retention of STAT3 (By similarity). Translocates to the nucleus in the presence of EDN1 (By similarity).</text>
</comment>
<comment type="tissue specificity">
    <text evidence="6">Detected in lung, heart, oviduct, ovary, uterus and kidney (at protein level). Detected in ovary, oviduct, and at lower levels in uterus and lung.</text>
</comment>
<comment type="PTM">
    <text evidence="2 3">Activated through tyrosine phosphorylation by BMX. Tyrosine phosphorylated in response to IL6, IL11, CNTF, LIF, KITLG/SCF, CSF1, EGF, PDGF, IFN-alpha and OSM. Activated KIT promotes phosphorylation on tyrosine residues and subsequent translocation to the nucleus. Tyrosine phosphorylated in response to constitutively activated FGFR1, FGFR2, FGFR3 and FGFR4. Phosphorylated on serine upon DNA damage, probably by ATM or ATR. Serine phosphorylation is important for the formation of stable DNA-binding STAT3 homodimers and maximal transcriptional activity. ARL2BP may participate in keeping the phosphorylated state of STAT3 within the nucleus. Tyrosine phosphorylated upon stimulation with EGF. Upon LPS challenge, phosphorylated within the nucleus by IRAK1. Phosphorylated on Ser-727 by RPS6KA5 (By similarity). Dephosphorylation on tyrosine residues by PTPN2 negatively regulates IL6/interleukin-6 signaling (By similarity). Phosphorylation at Tyr-705 by FER, isoform M2 of PKM (PKM2) or PTK6 leads to an increase of its transcriptional activity (By similarity). Phosphorylation at Tyr-705 is increased in the presence of calcineurin (By similarity). Phosphorylation at Tyr-640 by TYK2 negatively regulates transcriptional activity (By similarity).</text>
</comment>
<comment type="PTM">
    <text evidence="2">Acetylated on lysine residues by EP300/p300, promoting its activation (By similarity). Acetylation at Lys-49 and Lys-87 by EP300/p300 promotes its activation (By similarity). Acetylation at Lys-87 by EP300/p300 promotes its association with BRD2 and recruitment to chromatin (By similarity). Deacetylated at Lys-49 and Lys-87 by HDAC1 (By similarity). Acetylation at Lys-685 by EP300/p300 promotes its homodimerization and activation (By similarity). Deacetylated at Lys-685 by HDAC3 (By similarity). Acetylated on lysine residues by CREBBP (By similarity). Deacetylation by LOXL3 leads to disrupt STAT3 dimerization and inhibit STAT3 transcription activity (By similarity). Oxidation of lysine residues to allysine on STAT3 preferentially takes place on lysine residues that are acetylated (By similarity).</text>
</comment>
<comment type="PTM">
    <text evidence="2">Some lysine residues are oxidized to allysine by LOXL3, leading to disrupt STAT3 dimerization and inhibit STAT3 transcription activity. Oxidation of lysine residues to allysine on STAT3 preferentially takes place on lysine residues that are acetylated.</text>
</comment>
<comment type="miscellaneous">
    <text>Involved in the gp130-mediated signaling pathway.</text>
</comment>
<comment type="similarity">
    <text evidence="7">Belongs to the transcription factor STAT family.</text>
</comment>
<gene>
    <name type="primary">STAT3</name>
</gene>
<keyword id="KW-0007">Acetylation</keyword>
<keyword id="KW-0010">Activator</keyword>
<keyword id="KW-0963">Cytoplasm</keyword>
<keyword id="KW-0238">DNA-binding</keyword>
<keyword id="KW-0539">Nucleus</keyword>
<keyword id="KW-0597">Phosphoprotein</keyword>
<keyword id="KW-1185">Reference proteome</keyword>
<keyword id="KW-0727">SH2 domain</keyword>
<keyword id="KW-0804">Transcription</keyword>
<keyword id="KW-0805">Transcription regulation</keyword>
<organism>
    <name type="scientific">Sus scrofa</name>
    <name type="common">Pig</name>
    <dbReference type="NCBI Taxonomy" id="9823"/>
    <lineage>
        <taxon>Eukaryota</taxon>
        <taxon>Metazoa</taxon>
        <taxon>Chordata</taxon>
        <taxon>Craniata</taxon>
        <taxon>Vertebrata</taxon>
        <taxon>Euteleostomi</taxon>
        <taxon>Mammalia</taxon>
        <taxon>Eutheria</taxon>
        <taxon>Laurasiatheria</taxon>
        <taxon>Artiodactyla</taxon>
        <taxon>Suina</taxon>
        <taxon>Suidae</taxon>
        <taxon>Sus</taxon>
    </lineage>
</organism>